<feature type="chain" id="PRO_0000225471" description="Protein-glutamate methylesterase/protein-glutamine glutaminase 1">
    <location>
        <begin position="1"/>
        <end position="336"/>
    </location>
</feature>
<feature type="domain" description="Response regulatory" evidence="1">
    <location>
        <begin position="2"/>
        <end position="119"/>
    </location>
</feature>
<feature type="domain" description="CheB-type methylesterase" evidence="1">
    <location>
        <begin position="147"/>
        <end position="336"/>
    </location>
</feature>
<feature type="active site" evidence="1">
    <location>
        <position position="159"/>
    </location>
</feature>
<feature type="active site" evidence="1">
    <location>
        <position position="186"/>
    </location>
</feature>
<feature type="active site" evidence="1">
    <location>
        <position position="279"/>
    </location>
</feature>
<feature type="modified residue" description="4-aspartylphosphate" evidence="1">
    <location>
        <position position="53"/>
    </location>
</feature>
<protein>
    <recommendedName>
        <fullName evidence="1">Protein-glutamate methylesterase/protein-glutamine glutaminase 1</fullName>
        <ecNumber evidence="1">3.1.1.61</ecNumber>
        <ecNumber evidence="1">3.5.1.44</ecNumber>
    </recommendedName>
</protein>
<dbReference type="EC" id="3.1.1.61" evidence="1"/>
<dbReference type="EC" id="3.5.1.44" evidence="1"/>
<dbReference type="EMBL" id="CP000094">
    <property type="protein sequence ID" value="ABA72800.1"/>
    <property type="molecule type" value="Genomic_DNA"/>
</dbReference>
<dbReference type="RefSeq" id="WP_011332644.1">
    <property type="nucleotide sequence ID" value="NC_007492.2"/>
</dbReference>
<dbReference type="SMR" id="Q3KHF6"/>
<dbReference type="KEGG" id="pfo:Pfl01_1057"/>
<dbReference type="eggNOG" id="COG2201">
    <property type="taxonomic scope" value="Bacteria"/>
</dbReference>
<dbReference type="HOGENOM" id="CLU_000445_51_0_6"/>
<dbReference type="Proteomes" id="UP000002704">
    <property type="component" value="Chromosome"/>
</dbReference>
<dbReference type="GO" id="GO:0005737">
    <property type="term" value="C:cytoplasm"/>
    <property type="evidence" value="ECO:0007669"/>
    <property type="project" value="UniProtKB-SubCell"/>
</dbReference>
<dbReference type="GO" id="GO:0000156">
    <property type="term" value="F:phosphorelay response regulator activity"/>
    <property type="evidence" value="ECO:0007669"/>
    <property type="project" value="InterPro"/>
</dbReference>
<dbReference type="GO" id="GO:0008984">
    <property type="term" value="F:protein-glutamate methylesterase activity"/>
    <property type="evidence" value="ECO:0007669"/>
    <property type="project" value="UniProtKB-UniRule"/>
</dbReference>
<dbReference type="GO" id="GO:0050568">
    <property type="term" value="F:protein-glutamine glutaminase activity"/>
    <property type="evidence" value="ECO:0007669"/>
    <property type="project" value="UniProtKB-UniRule"/>
</dbReference>
<dbReference type="GO" id="GO:0006935">
    <property type="term" value="P:chemotaxis"/>
    <property type="evidence" value="ECO:0007669"/>
    <property type="project" value="UniProtKB-UniRule"/>
</dbReference>
<dbReference type="CDD" id="cd16432">
    <property type="entry name" value="CheB_Rec"/>
    <property type="match status" value="1"/>
</dbReference>
<dbReference type="CDD" id="cd17541">
    <property type="entry name" value="REC_CheB-like"/>
    <property type="match status" value="1"/>
</dbReference>
<dbReference type="Gene3D" id="3.40.50.2300">
    <property type="match status" value="1"/>
</dbReference>
<dbReference type="Gene3D" id="3.40.50.180">
    <property type="entry name" value="Methylesterase CheB, C-terminal domain"/>
    <property type="match status" value="1"/>
</dbReference>
<dbReference type="HAMAP" id="MF_00099">
    <property type="entry name" value="CheB_chemtxs"/>
    <property type="match status" value="1"/>
</dbReference>
<dbReference type="InterPro" id="IPR008248">
    <property type="entry name" value="CheB-like"/>
</dbReference>
<dbReference type="InterPro" id="IPR035909">
    <property type="entry name" value="CheB_C"/>
</dbReference>
<dbReference type="InterPro" id="IPR011006">
    <property type="entry name" value="CheY-like_superfamily"/>
</dbReference>
<dbReference type="InterPro" id="IPR000673">
    <property type="entry name" value="Sig_transdc_resp-reg_Me-estase"/>
</dbReference>
<dbReference type="InterPro" id="IPR001789">
    <property type="entry name" value="Sig_transdc_resp-reg_receiver"/>
</dbReference>
<dbReference type="NCBIfam" id="NF001965">
    <property type="entry name" value="PRK00742.1"/>
    <property type="match status" value="1"/>
</dbReference>
<dbReference type="NCBIfam" id="NF009206">
    <property type="entry name" value="PRK12555.1"/>
    <property type="match status" value="1"/>
</dbReference>
<dbReference type="PANTHER" id="PTHR42872">
    <property type="entry name" value="PROTEIN-GLUTAMATE METHYLESTERASE/PROTEIN-GLUTAMINE GLUTAMINASE"/>
    <property type="match status" value="1"/>
</dbReference>
<dbReference type="PANTHER" id="PTHR42872:SF6">
    <property type="entry name" value="PROTEIN-GLUTAMATE METHYLESTERASE_PROTEIN-GLUTAMINE GLUTAMINASE"/>
    <property type="match status" value="1"/>
</dbReference>
<dbReference type="Pfam" id="PF01339">
    <property type="entry name" value="CheB_methylest"/>
    <property type="match status" value="1"/>
</dbReference>
<dbReference type="Pfam" id="PF00072">
    <property type="entry name" value="Response_reg"/>
    <property type="match status" value="1"/>
</dbReference>
<dbReference type="PIRSF" id="PIRSF000876">
    <property type="entry name" value="RR_chemtxs_CheB"/>
    <property type="match status" value="1"/>
</dbReference>
<dbReference type="SMART" id="SM00448">
    <property type="entry name" value="REC"/>
    <property type="match status" value="1"/>
</dbReference>
<dbReference type="SUPFAM" id="SSF52172">
    <property type="entry name" value="CheY-like"/>
    <property type="match status" value="1"/>
</dbReference>
<dbReference type="SUPFAM" id="SSF52738">
    <property type="entry name" value="Methylesterase CheB, C-terminal domain"/>
    <property type="match status" value="1"/>
</dbReference>
<dbReference type="PROSITE" id="PS50122">
    <property type="entry name" value="CHEB"/>
    <property type="match status" value="1"/>
</dbReference>
<dbReference type="PROSITE" id="PS50110">
    <property type="entry name" value="RESPONSE_REGULATORY"/>
    <property type="match status" value="1"/>
</dbReference>
<evidence type="ECO:0000255" key="1">
    <source>
        <dbReference type="HAMAP-Rule" id="MF_00099"/>
    </source>
</evidence>
<name>CHEB1_PSEPF</name>
<organism>
    <name type="scientific">Pseudomonas fluorescens (strain Pf0-1)</name>
    <dbReference type="NCBI Taxonomy" id="205922"/>
    <lineage>
        <taxon>Bacteria</taxon>
        <taxon>Pseudomonadati</taxon>
        <taxon>Pseudomonadota</taxon>
        <taxon>Gammaproteobacteria</taxon>
        <taxon>Pseudomonadales</taxon>
        <taxon>Pseudomonadaceae</taxon>
        <taxon>Pseudomonas</taxon>
    </lineage>
</organism>
<keyword id="KW-0145">Chemotaxis</keyword>
<keyword id="KW-0963">Cytoplasm</keyword>
<keyword id="KW-0378">Hydrolase</keyword>
<keyword id="KW-0597">Phosphoprotein</keyword>
<reference key="1">
    <citation type="journal article" date="2009" name="Genome Biol.">
        <title>Genomic and genetic analyses of diversity and plant interactions of Pseudomonas fluorescens.</title>
        <authorList>
            <person name="Silby M.W."/>
            <person name="Cerdeno-Tarraga A.M."/>
            <person name="Vernikos G.S."/>
            <person name="Giddens S.R."/>
            <person name="Jackson R.W."/>
            <person name="Preston G.M."/>
            <person name="Zhang X.-X."/>
            <person name="Moon C.D."/>
            <person name="Gehrig S.M."/>
            <person name="Godfrey S.A.C."/>
            <person name="Knight C.G."/>
            <person name="Malone J.G."/>
            <person name="Robinson Z."/>
            <person name="Spiers A.J."/>
            <person name="Harris S."/>
            <person name="Challis G.L."/>
            <person name="Yaxley A.M."/>
            <person name="Harris D."/>
            <person name="Seeger K."/>
            <person name="Murphy L."/>
            <person name="Rutter S."/>
            <person name="Squares R."/>
            <person name="Quail M.A."/>
            <person name="Saunders E."/>
            <person name="Mavromatis K."/>
            <person name="Brettin T.S."/>
            <person name="Bentley S.D."/>
            <person name="Hothersall J."/>
            <person name="Stephens E."/>
            <person name="Thomas C.M."/>
            <person name="Parkhill J."/>
            <person name="Levy S.B."/>
            <person name="Rainey P.B."/>
            <person name="Thomson N.R."/>
        </authorList>
    </citation>
    <scope>NUCLEOTIDE SEQUENCE [LARGE SCALE GENOMIC DNA]</scope>
    <source>
        <strain>Pf0-1</strain>
    </source>
</reference>
<gene>
    <name evidence="1" type="primary">cheB1</name>
    <name type="ordered locus">Pfl01_1057</name>
</gene>
<accession>Q3KHF6</accession>
<sequence>MKIAIVNDMPLAVEALRRALAFEPAHQVVWVASNGAEAVRLCAENTPDLILMDLIMPVMDGVEATRRIMAESPCAIVIVTVDRQQNVHRVFEAMGHGALDVVDTPAIGGGNPQEAAAPLLRKILNIGWLIGEKTARSRPAPAAPRSTASRQRLVAIGSSAGGPAALEVLLKGLPRHFSAAIVLVQHVDQVFAAGMAEWLASASGLDVRLAREGEPPQAGAVLLAGTNHHIRLLKNGTLAYTAEPVNEIYRPSIDVFFESVANYWNGDAVGVLLTGMGRDGAQGLKLMRQQGYLTIAQDQQSSAVYGMPKAAAAIDAAVEIRPLEKIAPRLLEIFPK</sequence>
<proteinExistence type="inferred from homology"/>
<comment type="function">
    <text evidence="1">Involved in chemotaxis. Part of a chemotaxis signal transduction system that modulates chemotaxis in response to various stimuli. Catalyzes the demethylation of specific methylglutamate residues introduced into the chemoreceptors (methyl-accepting chemotaxis proteins or MCP) by CheR. Also mediates the irreversible deamidation of specific glutamine residues to glutamic acid.</text>
</comment>
<comment type="catalytic activity">
    <reaction evidence="1">
        <text>[protein]-L-glutamate 5-O-methyl ester + H2O = L-glutamyl-[protein] + methanol + H(+)</text>
        <dbReference type="Rhea" id="RHEA:23236"/>
        <dbReference type="Rhea" id="RHEA-COMP:10208"/>
        <dbReference type="Rhea" id="RHEA-COMP:10311"/>
        <dbReference type="ChEBI" id="CHEBI:15377"/>
        <dbReference type="ChEBI" id="CHEBI:15378"/>
        <dbReference type="ChEBI" id="CHEBI:17790"/>
        <dbReference type="ChEBI" id="CHEBI:29973"/>
        <dbReference type="ChEBI" id="CHEBI:82795"/>
        <dbReference type="EC" id="3.1.1.61"/>
    </reaction>
</comment>
<comment type="catalytic activity">
    <reaction evidence="1">
        <text>L-glutaminyl-[protein] + H2O = L-glutamyl-[protein] + NH4(+)</text>
        <dbReference type="Rhea" id="RHEA:16441"/>
        <dbReference type="Rhea" id="RHEA-COMP:10207"/>
        <dbReference type="Rhea" id="RHEA-COMP:10208"/>
        <dbReference type="ChEBI" id="CHEBI:15377"/>
        <dbReference type="ChEBI" id="CHEBI:28938"/>
        <dbReference type="ChEBI" id="CHEBI:29973"/>
        <dbReference type="ChEBI" id="CHEBI:30011"/>
        <dbReference type="EC" id="3.5.1.44"/>
    </reaction>
</comment>
<comment type="subcellular location">
    <subcellularLocation>
        <location evidence="1">Cytoplasm</location>
    </subcellularLocation>
</comment>
<comment type="domain">
    <text evidence="1">Contains a C-terminal catalytic domain, and an N-terminal region which modulates catalytic activity.</text>
</comment>
<comment type="PTM">
    <text evidence="1">Phosphorylated by CheA. Phosphorylation of the N-terminal regulatory domain activates the methylesterase activity.</text>
</comment>
<comment type="similarity">
    <text evidence="1">Belongs to the CheB family.</text>
</comment>